<organism>
    <name type="scientific">Streptomyces avermitilis (strain ATCC 31267 / DSM 46492 / JCM 5070 / NBRC 14893 / NCIMB 12804 / NRRL 8165 / MA-4680)</name>
    <dbReference type="NCBI Taxonomy" id="227882"/>
    <lineage>
        <taxon>Bacteria</taxon>
        <taxon>Bacillati</taxon>
        <taxon>Actinomycetota</taxon>
        <taxon>Actinomycetes</taxon>
        <taxon>Kitasatosporales</taxon>
        <taxon>Streptomycetaceae</taxon>
        <taxon>Streptomyces</taxon>
    </lineage>
</organism>
<dbReference type="EC" id="6.3.4.2" evidence="1"/>
<dbReference type="EMBL" id="BA000030">
    <property type="protein sequence ID" value="BAC74215.1"/>
    <property type="molecule type" value="Genomic_DNA"/>
</dbReference>
<dbReference type="RefSeq" id="WP_010987904.1">
    <property type="nucleotide sequence ID" value="NZ_JZJK01000082.1"/>
</dbReference>
<dbReference type="SMR" id="Q829A7"/>
<dbReference type="GeneID" id="41543579"/>
<dbReference type="KEGG" id="sma:SAVERM_6504"/>
<dbReference type="eggNOG" id="COG0504">
    <property type="taxonomic scope" value="Bacteria"/>
</dbReference>
<dbReference type="HOGENOM" id="CLU_011675_5_0_11"/>
<dbReference type="OrthoDB" id="9801107at2"/>
<dbReference type="UniPathway" id="UPA00159">
    <property type="reaction ID" value="UER00277"/>
</dbReference>
<dbReference type="Proteomes" id="UP000000428">
    <property type="component" value="Chromosome"/>
</dbReference>
<dbReference type="GO" id="GO:0005829">
    <property type="term" value="C:cytosol"/>
    <property type="evidence" value="ECO:0007669"/>
    <property type="project" value="TreeGrafter"/>
</dbReference>
<dbReference type="GO" id="GO:0005524">
    <property type="term" value="F:ATP binding"/>
    <property type="evidence" value="ECO:0007669"/>
    <property type="project" value="UniProtKB-KW"/>
</dbReference>
<dbReference type="GO" id="GO:0003883">
    <property type="term" value="F:CTP synthase activity"/>
    <property type="evidence" value="ECO:0007669"/>
    <property type="project" value="UniProtKB-UniRule"/>
</dbReference>
<dbReference type="GO" id="GO:0004359">
    <property type="term" value="F:glutaminase activity"/>
    <property type="evidence" value="ECO:0007669"/>
    <property type="project" value="RHEA"/>
</dbReference>
<dbReference type="GO" id="GO:0042802">
    <property type="term" value="F:identical protein binding"/>
    <property type="evidence" value="ECO:0007669"/>
    <property type="project" value="TreeGrafter"/>
</dbReference>
<dbReference type="GO" id="GO:0046872">
    <property type="term" value="F:metal ion binding"/>
    <property type="evidence" value="ECO:0007669"/>
    <property type="project" value="UniProtKB-KW"/>
</dbReference>
<dbReference type="GO" id="GO:0044210">
    <property type="term" value="P:'de novo' CTP biosynthetic process"/>
    <property type="evidence" value="ECO:0007669"/>
    <property type="project" value="UniProtKB-UniRule"/>
</dbReference>
<dbReference type="GO" id="GO:0019856">
    <property type="term" value="P:pyrimidine nucleobase biosynthetic process"/>
    <property type="evidence" value="ECO:0007669"/>
    <property type="project" value="TreeGrafter"/>
</dbReference>
<dbReference type="CDD" id="cd03113">
    <property type="entry name" value="CTPS_N"/>
    <property type="match status" value="1"/>
</dbReference>
<dbReference type="CDD" id="cd01746">
    <property type="entry name" value="GATase1_CTP_Synthase"/>
    <property type="match status" value="1"/>
</dbReference>
<dbReference type="FunFam" id="3.40.50.300:FF:000009">
    <property type="entry name" value="CTP synthase"/>
    <property type="match status" value="1"/>
</dbReference>
<dbReference type="FunFam" id="3.40.50.880:FF:000002">
    <property type="entry name" value="CTP synthase"/>
    <property type="match status" value="1"/>
</dbReference>
<dbReference type="Gene3D" id="3.40.50.880">
    <property type="match status" value="1"/>
</dbReference>
<dbReference type="Gene3D" id="3.40.50.300">
    <property type="entry name" value="P-loop containing nucleotide triphosphate hydrolases"/>
    <property type="match status" value="1"/>
</dbReference>
<dbReference type="HAMAP" id="MF_01227">
    <property type="entry name" value="PyrG"/>
    <property type="match status" value="1"/>
</dbReference>
<dbReference type="InterPro" id="IPR029062">
    <property type="entry name" value="Class_I_gatase-like"/>
</dbReference>
<dbReference type="InterPro" id="IPR004468">
    <property type="entry name" value="CTP_synthase"/>
</dbReference>
<dbReference type="InterPro" id="IPR017456">
    <property type="entry name" value="CTP_synthase_N"/>
</dbReference>
<dbReference type="InterPro" id="IPR017926">
    <property type="entry name" value="GATASE"/>
</dbReference>
<dbReference type="InterPro" id="IPR033828">
    <property type="entry name" value="GATase1_CTP_Synthase"/>
</dbReference>
<dbReference type="InterPro" id="IPR027417">
    <property type="entry name" value="P-loop_NTPase"/>
</dbReference>
<dbReference type="NCBIfam" id="NF003792">
    <property type="entry name" value="PRK05380.1"/>
    <property type="match status" value="1"/>
</dbReference>
<dbReference type="NCBIfam" id="TIGR00337">
    <property type="entry name" value="PyrG"/>
    <property type="match status" value="1"/>
</dbReference>
<dbReference type="PANTHER" id="PTHR11550">
    <property type="entry name" value="CTP SYNTHASE"/>
    <property type="match status" value="1"/>
</dbReference>
<dbReference type="PANTHER" id="PTHR11550:SF0">
    <property type="entry name" value="CTP SYNTHASE-RELATED"/>
    <property type="match status" value="1"/>
</dbReference>
<dbReference type="Pfam" id="PF06418">
    <property type="entry name" value="CTP_synth_N"/>
    <property type="match status" value="1"/>
</dbReference>
<dbReference type="Pfam" id="PF00117">
    <property type="entry name" value="GATase"/>
    <property type="match status" value="1"/>
</dbReference>
<dbReference type="SUPFAM" id="SSF52317">
    <property type="entry name" value="Class I glutamine amidotransferase-like"/>
    <property type="match status" value="1"/>
</dbReference>
<dbReference type="SUPFAM" id="SSF52540">
    <property type="entry name" value="P-loop containing nucleoside triphosphate hydrolases"/>
    <property type="match status" value="1"/>
</dbReference>
<dbReference type="PROSITE" id="PS51273">
    <property type="entry name" value="GATASE_TYPE_1"/>
    <property type="match status" value="1"/>
</dbReference>
<feature type="chain" id="PRO_0000266238" description="CTP synthase">
    <location>
        <begin position="1"/>
        <end position="549"/>
    </location>
</feature>
<feature type="domain" description="Glutamine amidotransferase type-1" evidence="1">
    <location>
        <begin position="297"/>
        <end position="548"/>
    </location>
</feature>
<feature type="region of interest" description="Amidoligase domain" evidence="1">
    <location>
        <begin position="1"/>
        <end position="272"/>
    </location>
</feature>
<feature type="active site" description="Nucleophile; for glutamine hydrolysis" evidence="1">
    <location>
        <position position="387"/>
    </location>
</feature>
<feature type="active site" evidence="1">
    <location>
        <position position="521"/>
    </location>
</feature>
<feature type="active site" evidence="1">
    <location>
        <position position="523"/>
    </location>
</feature>
<feature type="binding site" evidence="1">
    <location>
        <position position="19"/>
    </location>
    <ligand>
        <name>CTP</name>
        <dbReference type="ChEBI" id="CHEBI:37563"/>
        <note>allosteric inhibitor</note>
    </ligand>
</feature>
<feature type="binding site" evidence="1">
    <location>
        <position position="19"/>
    </location>
    <ligand>
        <name>UTP</name>
        <dbReference type="ChEBI" id="CHEBI:46398"/>
    </ligand>
</feature>
<feature type="binding site" evidence="1">
    <location>
        <begin position="20"/>
        <end position="25"/>
    </location>
    <ligand>
        <name>ATP</name>
        <dbReference type="ChEBI" id="CHEBI:30616"/>
    </ligand>
</feature>
<feature type="binding site" evidence="1">
    <location>
        <position position="77"/>
    </location>
    <ligand>
        <name>ATP</name>
        <dbReference type="ChEBI" id="CHEBI:30616"/>
    </ligand>
</feature>
<feature type="binding site" evidence="1">
    <location>
        <position position="77"/>
    </location>
    <ligand>
        <name>Mg(2+)</name>
        <dbReference type="ChEBI" id="CHEBI:18420"/>
    </ligand>
</feature>
<feature type="binding site" evidence="1">
    <location>
        <position position="146"/>
    </location>
    <ligand>
        <name>Mg(2+)</name>
        <dbReference type="ChEBI" id="CHEBI:18420"/>
    </ligand>
</feature>
<feature type="binding site" evidence="1">
    <location>
        <begin position="153"/>
        <end position="155"/>
    </location>
    <ligand>
        <name>CTP</name>
        <dbReference type="ChEBI" id="CHEBI:37563"/>
        <note>allosteric inhibitor</note>
    </ligand>
</feature>
<feature type="binding site" evidence="1">
    <location>
        <begin position="193"/>
        <end position="198"/>
    </location>
    <ligand>
        <name>CTP</name>
        <dbReference type="ChEBI" id="CHEBI:37563"/>
        <note>allosteric inhibitor</note>
    </ligand>
</feature>
<feature type="binding site" evidence="1">
    <location>
        <begin position="193"/>
        <end position="198"/>
    </location>
    <ligand>
        <name>UTP</name>
        <dbReference type="ChEBI" id="CHEBI:46398"/>
    </ligand>
</feature>
<feature type="binding site" evidence="1">
    <location>
        <position position="229"/>
    </location>
    <ligand>
        <name>CTP</name>
        <dbReference type="ChEBI" id="CHEBI:37563"/>
        <note>allosteric inhibitor</note>
    </ligand>
</feature>
<feature type="binding site" evidence="1">
    <location>
        <position position="229"/>
    </location>
    <ligand>
        <name>UTP</name>
        <dbReference type="ChEBI" id="CHEBI:46398"/>
    </ligand>
</feature>
<feature type="binding site" evidence="1">
    <location>
        <position position="360"/>
    </location>
    <ligand>
        <name>L-glutamine</name>
        <dbReference type="ChEBI" id="CHEBI:58359"/>
    </ligand>
</feature>
<feature type="binding site" evidence="1">
    <location>
        <begin position="388"/>
        <end position="391"/>
    </location>
    <ligand>
        <name>L-glutamine</name>
        <dbReference type="ChEBI" id="CHEBI:58359"/>
    </ligand>
</feature>
<feature type="binding site" evidence="1">
    <location>
        <position position="411"/>
    </location>
    <ligand>
        <name>L-glutamine</name>
        <dbReference type="ChEBI" id="CHEBI:58359"/>
    </ligand>
</feature>
<feature type="binding site" evidence="1">
    <location>
        <position position="473"/>
    </location>
    <ligand>
        <name>L-glutamine</name>
        <dbReference type="ChEBI" id="CHEBI:58359"/>
    </ligand>
</feature>
<evidence type="ECO:0000255" key="1">
    <source>
        <dbReference type="HAMAP-Rule" id="MF_01227"/>
    </source>
</evidence>
<protein>
    <recommendedName>
        <fullName evidence="1">CTP synthase</fullName>
        <ecNumber evidence="1">6.3.4.2</ecNumber>
    </recommendedName>
    <alternativeName>
        <fullName evidence="1">Cytidine 5'-triphosphate synthase</fullName>
    </alternativeName>
    <alternativeName>
        <fullName evidence="1">Cytidine triphosphate synthetase</fullName>
        <shortName evidence="1">CTP synthetase</shortName>
        <shortName evidence="1">CTPS</shortName>
    </alternativeName>
    <alternativeName>
        <fullName evidence="1">UTP--ammonia ligase</fullName>
    </alternativeName>
</protein>
<proteinExistence type="inferred from homology"/>
<gene>
    <name evidence="1" type="primary">pyrG</name>
    <name type="ordered locus">SAV_6504</name>
</gene>
<comment type="function">
    <text evidence="1">Catalyzes the ATP-dependent amination of UTP to CTP with either L-glutamine or ammonia as the source of nitrogen. Regulates intracellular CTP levels through interactions with the four ribonucleotide triphosphates.</text>
</comment>
<comment type="catalytic activity">
    <reaction evidence="1">
        <text>UTP + L-glutamine + ATP + H2O = CTP + L-glutamate + ADP + phosphate + 2 H(+)</text>
        <dbReference type="Rhea" id="RHEA:26426"/>
        <dbReference type="ChEBI" id="CHEBI:15377"/>
        <dbReference type="ChEBI" id="CHEBI:15378"/>
        <dbReference type="ChEBI" id="CHEBI:29985"/>
        <dbReference type="ChEBI" id="CHEBI:30616"/>
        <dbReference type="ChEBI" id="CHEBI:37563"/>
        <dbReference type="ChEBI" id="CHEBI:43474"/>
        <dbReference type="ChEBI" id="CHEBI:46398"/>
        <dbReference type="ChEBI" id="CHEBI:58359"/>
        <dbReference type="ChEBI" id="CHEBI:456216"/>
        <dbReference type="EC" id="6.3.4.2"/>
    </reaction>
</comment>
<comment type="catalytic activity">
    <reaction evidence="1">
        <text>L-glutamine + H2O = L-glutamate + NH4(+)</text>
        <dbReference type="Rhea" id="RHEA:15889"/>
        <dbReference type="ChEBI" id="CHEBI:15377"/>
        <dbReference type="ChEBI" id="CHEBI:28938"/>
        <dbReference type="ChEBI" id="CHEBI:29985"/>
        <dbReference type="ChEBI" id="CHEBI:58359"/>
    </reaction>
</comment>
<comment type="catalytic activity">
    <reaction evidence="1">
        <text>UTP + NH4(+) + ATP = CTP + ADP + phosphate + 2 H(+)</text>
        <dbReference type="Rhea" id="RHEA:16597"/>
        <dbReference type="ChEBI" id="CHEBI:15378"/>
        <dbReference type="ChEBI" id="CHEBI:28938"/>
        <dbReference type="ChEBI" id="CHEBI:30616"/>
        <dbReference type="ChEBI" id="CHEBI:37563"/>
        <dbReference type="ChEBI" id="CHEBI:43474"/>
        <dbReference type="ChEBI" id="CHEBI:46398"/>
        <dbReference type="ChEBI" id="CHEBI:456216"/>
    </reaction>
</comment>
<comment type="activity regulation">
    <text evidence="1">Allosterically activated by GTP, when glutamine is the substrate; GTP has no effect on the reaction when ammonia is the substrate. The allosteric effector GTP functions by stabilizing the protein conformation that binds the tetrahedral intermediate(s) formed during glutamine hydrolysis. Inhibited by the product CTP, via allosteric rather than competitive inhibition.</text>
</comment>
<comment type="pathway">
    <text evidence="1">Pyrimidine metabolism; CTP biosynthesis via de novo pathway; CTP from UDP: step 2/2.</text>
</comment>
<comment type="subunit">
    <text evidence="1">Homotetramer.</text>
</comment>
<comment type="miscellaneous">
    <text evidence="1">CTPSs have evolved a hybrid strategy for distinguishing between UTP and CTP. The overlapping regions of the product feedback inhibitory and substrate sites recognize a common feature in both compounds, the triphosphate moiety. To differentiate isosteric substrate and product pyrimidine rings, an additional pocket far from the expected kinase/ligase catalytic site, specifically recognizes the cytosine and ribose portions of the product inhibitor.</text>
</comment>
<comment type="similarity">
    <text evidence="1">Belongs to the CTP synthase family.</text>
</comment>
<keyword id="KW-0067">ATP-binding</keyword>
<keyword id="KW-0315">Glutamine amidotransferase</keyword>
<keyword id="KW-0436">Ligase</keyword>
<keyword id="KW-0460">Magnesium</keyword>
<keyword id="KW-0479">Metal-binding</keyword>
<keyword id="KW-0547">Nucleotide-binding</keyword>
<keyword id="KW-0665">Pyrimidine biosynthesis</keyword>
<keyword id="KW-1185">Reference proteome</keyword>
<accession>Q829A7</accession>
<sequence length="549" mass="60150">MPPKSTTTKHIFVTGGVASSLGKGLTASSLGMLLKARGLRVVMQKLDPYLNVDPGTMNPFQHGEVFVTNDGAETDLDIGHYERFLDRDLDGSANVTTGQVYSTVIAKERRGEYLGDTVQVIPHITNEIKHRIRRMATDEVDVVITEVGGTVGDIESLPFLETVRQVRHEVGRDNVFVVHISLLPYIGPSGELKTKPTQHSVAALRNIGIQPDAIVLRCDREVPTAIKRKISLMCDVDEAAVVACPDARSIYDIPKTVHGEGLDAYVVRKLDLPFRDVDWTTWDDLLDRVHKPDHEINLALVGKYIDLPDAYLSVTEALRAGGFANRARVKIKWVTSDDCKTPAGAAGQLGDVDAICIPGGFGDRGVSGKVGAIQYAREHRIPLLGLCLGLQCIVIEAARNLADIPDANSTEFDSATGHPVISTMAEQLDIVAGEGDMGGTMRLGMYPAKLAEGSIVREVYDGKEYVEERHRHRYEVNNAYRAELEKKAGLQFSGTSPDGKLVEYVEYPREVHPYLVATQAHPELRSRPTRPHPLFAGLVKAAVERKTGK</sequence>
<reference key="1">
    <citation type="journal article" date="2001" name="Proc. Natl. Acad. Sci. U.S.A.">
        <title>Genome sequence of an industrial microorganism Streptomyces avermitilis: deducing the ability of producing secondary metabolites.</title>
        <authorList>
            <person name="Omura S."/>
            <person name="Ikeda H."/>
            <person name="Ishikawa J."/>
            <person name="Hanamoto A."/>
            <person name="Takahashi C."/>
            <person name="Shinose M."/>
            <person name="Takahashi Y."/>
            <person name="Horikawa H."/>
            <person name="Nakazawa H."/>
            <person name="Osonoe T."/>
            <person name="Kikuchi H."/>
            <person name="Shiba T."/>
            <person name="Sakaki Y."/>
            <person name="Hattori M."/>
        </authorList>
    </citation>
    <scope>NUCLEOTIDE SEQUENCE [LARGE SCALE GENOMIC DNA]</scope>
    <source>
        <strain>ATCC 31267 / DSM 46492 / JCM 5070 / NBRC 14893 / NCIMB 12804 / NRRL 8165 / MA-4680</strain>
    </source>
</reference>
<reference key="2">
    <citation type="journal article" date="2003" name="Nat. Biotechnol.">
        <title>Complete genome sequence and comparative analysis of the industrial microorganism Streptomyces avermitilis.</title>
        <authorList>
            <person name="Ikeda H."/>
            <person name="Ishikawa J."/>
            <person name="Hanamoto A."/>
            <person name="Shinose M."/>
            <person name="Kikuchi H."/>
            <person name="Shiba T."/>
            <person name="Sakaki Y."/>
            <person name="Hattori M."/>
            <person name="Omura S."/>
        </authorList>
    </citation>
    <scope>NUCLEOTIDE SEQUENCE [LARGE SCALE GENOMIC DNA]</scope>
    <source>
        <strain>ATCC 31267 / DSM 46492 / JCM 5070 / NBRC 14893 / NCIMB 12804 / NRRL 8165 / MA-4680</strain>
    </source>
</reference>
<name>PYRG_STRAW</name>